<reference key="1">
    <citation type="journal article" date="2008" name="Antimicrob. Agents Chemother.">
        <title>Mutated response regulator graR is responsible for phenotypic conversion of Staphylococcus aureus from heterogeneous vancomycin-intermediate resistance to vancomycin-intermediate resistance.</title>
        <authorList>
            <person name="Neoh H.-M."/>
            <person name="Cui L."/>
            <person name="Yuzawa H."/>
            <person name="Takeuchi F."/>
            <person name="Matsuo M."/>
            <person name="Hiramatsu K."/>
        </authorList>
    </citation>
    <scope>NUCLEOTIDE SEQUENCE [LARGE SCALE GENOMIC DNA]</scope>
    <source>
        <strain>Mu3 / ATCC 700698</strain>
    </source>
</reference>
<evidence type="ECO:0000255" key="1">
    <source>
        <dbReference type="HAMAP-Rule" id="MF_00015"/>
    </source>
</evidence>
<proteinExistence type="inferred from homology"/>
<dbReference type="EC" id="3.4.21.88" evidence="1"/>
<dbReference type="EMBL" id="AP009324">
    <property type="protein sequence ID" value="BAF78211.1"/>
    <property type="molecule type" value="Genomic_DNA"/>
</dbReference>
<dbReference type="RefSeq" id="WP_001208755.1">
    <property type="nucleotide sequence ID" value="NC_009782.1"/>
</dbReference>
<dbReference type="SMR" id="A7X1Z4"/>
<dbReference type="MEROPS" id="S24.001"/>
<dbReference type="KEGG" id="saw:SAHV_1328"/>
<dbReference type="HOGENOM" id="CLU_066192_45_1_9"/>
<dbReference type="GO" id="GO:0003677">
    <property type="term" value="F:DNA binding"/>
    <property type="evidence" value="ECO:0007669"/>
    <property type="project" value="UniProtKB-UniRule"/>
</dbReference>
<dbReference type="GO" id="GO:0004252">
    <property type="term" value="F:serine-type endopeptidase activity"/>
    <property type="evidence" value="ECO:0007669"/>
    <property type="project" value="UniProtKB-UniRule"/>
</dbReference>
<dbReference type="GO" id="GO:0006281">
    <property type="term" value="P:DNA repair"/>
    <property type="evidence" value="ECO:0007669"/>
    <property type="project" value="UniProtKB-UniRule"/>
</dbReference>
<dbReference type="GO" id="GO:0006260">
    <property type="term" value="P:DNA replication"/>
    <property type="evidence" value="ECO:0007669"/>
    <property type="project" value="UniProtKB-UniRule"/>
</dbReference>
<dbReference type="GO" id="GO:0045892">
    <property type="term" value="P:negative regulation of DNA-templated transcription"/>
    <property type="evidence" value="ECO:0007669"/>
    <property type="project" value="UniProtKB-UniRule"/>
</dbReference>
<dbReference type="GO" id="GO:0006508">
    <property type="term" value="P:proteolysis"/>
    <property type="evidence" value="ECO:0007669"/>
    <property type="project" value="InterPro"/>
</dbReference>
<dbReference type="GO" id="GO:0009432">
    <property type="term" value="P:SOS response"/>
    <property type="evidence" value="ECO:0007669"/>
    <property type="project" value="UniProtKB-UniRule"/>
</dbReference>
<dbReference type="CDD" id="cd00090">
    <property type="entry name" value="HTH_ARSR"/>
    <property type="match status" value="1"/>
</dbReference>
<dbReference type="CDD" id="cd06529">
    <property type="entry name" value="S24_LexA-like"/>
    <property type="match status" value="1"/>
</dbReference>
<dbReference type="FunFam" id="1.10.10.10:FF:000009">
    <property type="entry name" value="LexA repressor"/>
    <property type="match status" value="1"/>
</dbReference>
<dbReference type="FunFam" id="2.10.109.10:FF:000001">
    <property type="entry name" value="LexA repressor"/>
    <property type="match status" value="1"/>
</dbReference>
<dbReference type="Gene3D" id="2.10.109.10">
    <property type="entry name" value="Umud Fragment, subunit A"/>
    <property type="match status" value="1"/>
</dbReference>
<dbReference type="Gene3D" id="1.10.10.10">
    <property type="entry name" value="Winged helix-like DNA-binding domain superfamily/Winged helix DNA-binding domain"/>
    <property type="match status" value="1"/>
</dbReference>
<dbReference type="HAMAP" id="MF_00015">
    <property type="entry name" value="LexA"/>
    <property type="match status" value="1"/>
</dbReference>
<dbReference type="InterPro" id="IPR011991">
    <property type="entry name" value="ArsR-like_HTH"/>
</dbReference>
<dbReference type="InterPro" id="IPR006200">
    <property type="entry name" value="LexA"/>
</dbReference>
<dbReference type="InterPro" id="IPR039418">
    <property type="entry name" value="LexA-like"/>
</dbReference>
<dbReference type="InterPro" id="IPR036286">
    <property type="entry name" value="LexA/Signal_pep-like_sf"/>
</dbReference>
<dbReference type="InterPro" id="IPR006199">
    <property type="entry name" value="LexA_DNA-bd_dom"/>
</dbReference>
<dbReference type="InterPro" id="IPR050077">
    <property type="entry name" value="LexA_repressor"/>
</dbReference>
<dbReference type="InterPro" id="IPR006197">
    <property type="entry name" value="Peptidase_S24_LexA"/>
</dbReference>
<dbReference type="InterPro" id="IPR015927">
    <property type="entry name" value="Peptidase_S24_S26A/B/C"/>
</dbReference>
<dbReference type="InterPro" id="IPR036388">
    <property type="entry name" value="WH-like_DNA-bd_sf"/>
</dbReference>
<dbReference type="InterPro" id="IPR036390">
    <property type="entry name" value="WH_DNA-bd_sf"/>
</dbReference>
<dbReference type="NCBIfam" id="TIGR00498">
    <property type="entry name" value="lexA"/>
    <property type="match status" value="1"/>
</dbReference>
<dbReference type="PANTHER" id="PTHR33516">
    <property type="entry name" value="LEXA REPRESSOR"/>
    <property type="match status" value="1"/>
</dbReference>
<dbReference type="PANTHER" id="PTHR33516:SF2">
    <property type="entry name" value="LEXA REPRESSOR-RELATED"/>
    <property type="match status" value="1"/>
</dbReference>
<dbReference type="Pfam" id="PF01726">
    <property type="entry name" value="LexA_DNA_bind"/>
    <property type="match status" value="1"/>
</dbReference>
<dbReference type="Pfam" id="PF00717">
    <property type="entry name" value="Peptidase_S24"/>
    <property type="match status" value="1"/>
</dbReference>
<dbReference type="PRINTS" id="PR00726">
    <property type="entry name" value="LEXASERPTASE"/>
</dbReference>
<dbReference type="SUPFAM" id="SSF51306">
    <property type="entry name" value="LexA/Signal peptidase"/>
    <property type="match status" value="1"/>
</dbReference>
<dbReference type="SUPFAM" id="SSF46785">
    <property type="entry name" value="Winged helix' DNA-binding domain"/>
    <property type="match status" value="1"/>
</dbReference>
<comment type="function">
    <text evidence="1">Represses a number of genes involved in the response to DNA damage (SOS response), including recA and lexA. In the presence of single-stranded DNA, RecA interacts with LexA causing an autocatalytic cleavage which disrupts the DNA-binding part of LexA, leading to derepression of the SOS regulon and eventually DNA repair.</text>
</comment>
<comment type="catalytic activity">
    <reaction evidence="1">
        <text>Hydrolysis of Ala-|-Gly bond in repressor LexA.</text>
        <dbReference type="EC" id="3.4.21.88"/>
    </reaction>
</comment>
<comment type="subunit">
    <text evidence="1">Homodimer.</text>
</comment>
<comment type="similarity">
    <text evidence="1">Belongs to the peptidase S24 family.</text>
</comment>
<accession>A7X1Z4</accession>
<sequence>MRELTKRQSEIYNYIKQVVQMKGYPPSVREIGEAVGLASSSTVHGHLSRLEEKGYIRRDPTKPRAIEIVSDQTNDNINMEETIHVPVIGKVTAGVPITAVENIEEYFPLPEHLTSTHNSDIFILNVVGDSMIEAGILDGDKVIVRSQTIAENGDIIVAMTEEDEATVKRFYKEKNRYRLQPENSTMEPIYLDNVAVIGKVIGLYREM</sequence>
<organism>
    <name type="scientific">Staphylococcus aureus (strain Mu3 / ATCC 700698)</name>
    <dbReference type="NCBI Taxonomy" id="418127"/>
    <lineage>
        <taxon>Bacteria</taxon>
        <taxon>Bacillati</taxon>
        <taxon>Bacillota</taxon>
        <taxon>Bacilli</taxon>
        <taxon>Bacillales</taxon>
        <taxon>Staphylococcaceae</taxon>
        <taxon>Staphylococcus</taxon>
    </lineage>
</organism>
<gene>
    <name evidence="1" type="primary">lexA</name>
    <name type="ordered locus">SAHV_1328</name>
</gene>
<keyword id="KW-0068">Autocatalytic cleavage</keyword>
<keyword id="KW-0227">DNA damage</keyword>
<keyword id="KW-0234">DNA repair</keyword>
<keyword id="KW-0235">DNA replication</keyword>
<keyword id="KW-0238">DNA-binding</keyword>
<keyword id="KW-0378">Hydrolase</keyword>
<keyword id="KW-0678">Repressor</keyword>
<keyword id="KW-0742">SOS response</keyword>
<keyword id="KW-0804">Transcription</keyword>
<keyword id="KW-0805">Transcription regulation</keyword>
<protein>
    <recommendedName>
        <fullName evidence="1">LexA repressor</fullName>
        <ecNumber evidence="1">3.4.21.88</ecNumber>
    </recommendedName>
</protein>
<name>LEXA_STAA1</name>
<feature type="chain" id="PRO_0000322761" description="LexA repressor">
    <location>
        <begin position="1"/>
        <end position="207"/>
    </location>
</feature>
<feature type="DNA-binding region" description="H-T-H motif" evidence="1">
    <location>
        <begin position="28"/>
        <end position="48"/>
    </location>
</feature>
<feature type="active site" description="For autocatalytic cleavage activity" evidence="1">
    <location>
        <position position="130"/>
    </location>
</feature>
<feature type="active site" description="For autocatalytic cleavage activity" evidence="1">
    <location>
        <position position="168"/>
    </location>
</feature>
<feature type="site" description="Cleavage; by autolysis" evidence="1">
    <location>
        <begin position="93"/>
        <end position="94"/>
    </location>
</feature>